<keyword id="KW-1185">Reference proteome</keyword>
<keyword id="KW-0687">Ribonucleoprotein</keyword>
<keyword id="KW-0689">Ribosomal protein</keyword>
<keyword id="KW-0694">RNA-binding</keyword>
<keyword id="KW-0699">rRNA-binding</keyword>
<keyword id="KW-0820">tRNA-binding</keyword>
<dbReference type="EMBL" id="BA000022">
    <property type="protein sequence ID" value="BAA17342.1"/>
    <property type="molecule type" value="Genomic_DNA"/>
</dbReference>
<dbReference type="PIR" id="S77495">
    <property type="entry name" value="S77495"/>
</dbReference>
<dbReference type="SMR" id="P73313"/>
<dbReference type="FunCoup" id="P73313">
    <property type="interactions" value="436"/>
</dbReference>
<dbReference type="IntAct" id="P73313">
    <property type="interactions" value="2"/>
</dbReference>
<dbReference type="STRING" id="1148.gene:10498205"/>
<dbReference type="PaxDb" id="1148-1652420"/>
<dbReference type="EnsemblBacteria" id="BAA17342">
    <property type="protein sequence ID" value="BAA17342"/>
    <property type="gene ID" value="BAA17342"/>
</dbReference>
<dbReference type="KEGG" id="syn:sll1805"/>
<dbReference type="eggNOG" id="COG0197">
    <property type="taxonomic scope" value="Bacteria"/>
</dbReference>
<dbReference type="InParanoid" id="P73313"/>
<dbReference type="PhylomeDB" id="P73313"/>
<dbReference type="Proteomes" id="UP000001425">
    <property type="component" value="Chromosome"/>
</dbReference>
<dbReference type="GO" id="GO:0022625">
    <property type="term" value="C:cytosolic large ribosomal subunit"/>
    <property type="evidence" value="ECO:0000318"/>
    <property type="project" value="GO_Central"/>
</dbReference>
<dbReference type="GO" id="GO:0019843">
    <property type="term" value="F:rRNA binding"/>
    <property type="evidence" value="ECO:0000318"/>
    <property type="project" value="GO_Central"/>
</dbReference>
<dbReference type="GO" id="GO:0003735">
    <property type="term" value="F:structural constituent of ribosome"/>
    <property type="evidence" value="ECO:0000318"/>
    <property type="project" value="GO_Central"/>
</dbReference>
<dbReference type="GO" id="GO:0000049">
    <property type="term" value="F:tRNA binding"/>
    <property type="evidence" value="ECO:0007669"/>
    <property type="project" value="UniProtKB-KW"/>
</dbReference>
<dbReference type="GO" id="GO:0006412">
    <property type="term" value="P:translation"/>
    <property type="evidence" value="ECO:0007669"/>
    <property type="project" value="UniProtKB-UniRule"/>
</dbReference>
<dbReference type="CDD" id="cd01433">
    <property type="entry name" value="Ribosomal_L16_L10e"/>
    <property type="match status" value="1"/>
</dbReference>
<dbReference type="FunFam" id="3.90.1170.10:FF:000001">
    <property type="entry name" value="50S ribosomal protein L16"/>
    <property type="match status" value="1"/>
</dbReference>
<dbReference type="Gene3D" id="3.90.1170.10">
    <property type="entry name" value="Ribosomal protein L10e/L16"/>
    <property type="match status" value="1"/>
</dbReference>
<dbReference type="HAMAP" id="MF_01342">
    <property type="entry name" value="Ribosomal_uL16"/>
    <property type="match status" value="1"/>
</dbReference>
<dbReference type="InterPro" id="IPR047873">
    <property type="entry name" value="Ribosomal_uL16"/>
</dbReference>
<dbReference type="InterPro" id="IPR000114">
    <property type="entry name" value="Ribosomal_uL16_bact-type"/>
</dbReference>
<dbReference type="InterPro" id="IPR020798">
    <property type="entry name" value="Ribosomal_uL16_CS"/>
</dbReference>
<dbReference type="InterPro" id="IPR016180">
    <property type="entry name" value="Ribosomal_uL16_dom"/>
</dbReference>
<dbReference type="InterPro" id="IPR036920">
    <property type="entry name" value="Ribosomal_uL16_sf"/>
</dbReference>
<dbReference type="NCBIfam" id="TIGR01164">
    <property type="entry name" value="rplP_bact"/>
    <property type="match status" value="1"/>
</dbReference>
<dbReference type="PANTHER" id="PTHR12220">
    <property type="entry name" value="50S/60S RIBOSOMAL PROTEIN L16"/>
    <property type="match status" value="1"/>
</dbReference>
<dbReference type="PANTHER" id="PTHR12220:SF13">
    <property type="entry name" value="LARGE RIBOSOMAL SUBUNIT PROTEIN UL16M"/>
    <property type="match status" value="1"/>
</dbReference>
<dbReference type="Pfam" id="PF00252">
    <property type="entry name" value="Ribosomal_L16"/>
    <property type="match status" value="1"/>
</dbReference>
<dbReference type="PRINTS" id="PR00060">
    <property type="entry name" value="RIBOSOMALL16"/>
</dbReference>
<dbReference type="SUPFAM" id="SSF54686">
    <property type="entry name" value="Ribosomal protein L16p/L10e"/>
    <property type="match status" value="1"/>
</dbReference>
<dbReference type="PROSITE" id="PS00586">
    <property type="entry name" value="RIBOSOMAL_L16_1"/>
    <property type="match status" value="1"/>
</dbReference>
<dbReference type="PROSITE" id="PS00701">
    <property type="entry name" value="RIBOSOMAL_L16_2"/>
    <property type="match status" value="1"/>
</dbReference>
<sequence>MLSPRRTKFRKQQRGRMRGLAERGSTLNFGDYALQATEPCWITSRQIEAARRAMTRYIRRGGKIWIRIFPDKPVTMRPAETRMGSGKGSPEYWVAVVKPGRVMFELAGVSEEVAREAMRLAAQKLPIKTKFISRQEDYI</sequence>
<name>RL16_SYNY3</name>
<comment type="function">
    <text evidence="1">Binds 23S rRNA and is also seen to make contacts with the A and possibly P site tRNAs.</text>
</comment>
<comment type="subunit">
    <text evidence="1">Part of the 50S ribosomal subunit.</text>
</comment>
<comment type="similarity">
    <text evidence="1">Belongs to the universal ribosomal protein uL16 family.</text>
</comment>
<accession>P73313</accession>
<organism>
    <name type="scientific">Synechocystis sp. (strain ATCC 27184 / PCC 6803 / Kazusa)</name>
    <dbReference type="NCBI Taxonomy" id="1111708"/>
    <lineage>
        <taxon>Bacteria</taxon>
        <taxon>Bacillati</taxon>
        <taxon>Cyanobacteriota</taxon>
        <taxon>Cyanophyceae</taxon>
        <taxon>Synechococcales</taxon>
        <taxon>Merismopediaceae</taxon>
        <taxon>Synechocystis</taxon>
    </lineage>
</organism>
<evidence type="ECO:0000255" key="1">
    <source>
        <dbReference type="HAMAP-Rule" id="MF_01342"/>
    </source>
</evidence>
<evidence type="ECO:0000305" key="2"/>
<feature type="chain" id="PRO_0000062232" description="Large ribosomal subunit protein uL16">
    <location>
        <begin position="1"/>
        <end position="139"/>
    </location>
</feature>
<proteinExistence type="inferred from homology"/>
<gene>
    <name evidence="1" type="primary">rplP</name>
    <name evidence="1" type="synonym">rpl16</name>
    <name type="ordered locus">sll1805</name>
</gene>
<reference key="1">
    <citation type="journal article" date="1996" name="DNA Res.">
        <title>Sequence analysis of the genome of the unicellular cyanobacterium Synechocystis sp. strain PCC6803. II. Sequence determination of the entire genome and assignment of potential protein-coding regions.</title>
        <authorList>
            <person name="Kaneko T."/>
            <person name="Sato S."/>
            <person name="Kotani H."/>
            <person name="Tanaka A."/>
            <person name="Asamizu E."/>
            <person name="Nakamura Y."/>
            <person name="Miyajima N."/>
            <person name="Hirosawa M."/>
            <person name="Sugiura M."/>
            <person name="Sasamoto S."/>
            <person name="Kimura T."/>
            <person name="Hosouchi T."/>
            <person name="Matsuno A."/>
            <person name="Muraki A."/>
            <person name="Nakazaki N."/>
            <person name="Naruo K."/>
            <person name="Okumura S."/>
            <person name="Shimpo S."/>
            <person name="Takeuchi C."/>
            <person name="Wada T."/>
            <person name="Watanabe A."/>
            <person name="Yamada M."/>
            <person name="Yasuda M."/>
            <person name="Tabata S."/>
        </authorList>
    </citation>
    <scope>NUCLEOTIDE SEQUENCE [LARGE SCALE GENOMIC DNA]</scope>
    <source>
        <strain>ATCC 27184 / PCC 6803 / Kazusa</strain>
    </source>
</reference>
<protein>
    <recommendedName>
        <fullName evidence="1">Large ribosomal subunit protein uL16</fullName>
    </recommendedName>
    <alternativeName>
        <fullName evidence="2">50S ribosomal protein L16</fullName>
    </alternativeName>
</protein>